<comment type="function">
    <text evidence="1">Digests double-stranded RNA. Involved in the processing of primary rRNA transcript to yield the immediate precursors to the large and small rRNAs (23S and 16S). Processes some mRNAs, and tRNAs when they are encoded in the rRNA operon. Processes pre-crRNA and tracrRNA of type II CRISPR loci if present in the organism.</text>
</comment>
<comment type="catalytic activity">
    <reaction evidence="1">
        <text>Endonucleolytic cleavage to 5'-phosphomonoester.</text>
        <dbReference type="EC" id="3.1.26.3"/>
    </reaction>
</comment>
<comment type="cofactor">
    <cofactor evidence="1">
        <name>Mg(2+)</name>
        <dbReference type="ChEBI" id="CHEBI:18420"/>
    </cofactor>
</comment>
<comment type="subunit">
    <text evidence="1">Homodimer.</text>
</comment>
<comment type="subcellular location">
    <subcellularLocation>
        <location evidence="1">Cytoplasm</location>
    </subcellularLocation>
</comment>
<comment type="similarity">
    <text evidence="1">Belongs to the ribonuclease III family.</text>
</comment>
<evidence type="ECO:0000255" key="1">
    <source>
        <dbReference type="HAMAP-Rule" id="MF_00104"/>
    </source>
</evidence>
<accession>A3MZQ9</accession>
<proteinExistence type="inferred from homology"/>
<gene>
    <name evidence="1" type="primary">rnc</name>
    <name type="ordered locus">APL_0543</name>
</gene>
<keyword id="KW-0963">Cytoplasm</keyword>
<keyword id="KW-0255">Endonuclease</keyword>
<keyword id="KW-0378">Hydrolase</keyword>
<keyword id="KW-0460">Magnesium</keyword>
<keyword id="KW-0479">Metal-binding</keyword>
<keyword id="KW-0507">mRNA processing</keyword>
<keyword id="KW-0540">Nuclease</keyword>
<keyword id="KW-1185">Reference proteome</keyword>
<keyword id="KW-0694">RNA-binding</keyword>
<keyword id="KW-0698">rRNA processing</keyword>
<keyword id="KW-0699">rRNA-binding</keyword>
<keyword id="KW-0819">tRNA processing</keyword>
<dbReference type="EC" id="3.1.26.3" evidence="1"/>
<dbReference type="EMBL" id="CP000569">
    <property type="protein sequence ID" value="ABN73645.1"/>
    <property type="molecule type" value="Genomic_DNA"/>
</dbReference>
<dbReference type="RefSeq" id="WP_011848424.1">
    <property type="nucleotide sequence ID" value="NC_009053.1"/>
</dbReference>
<dbReference type="SMR" id="A3MZQ9"/>
<dbReference type="STRING" id="416269.APL_0543"/>
<dbReference type="EnsemblBacteria" id="ABN73645">
    <property type="protein sequence ID" value="ABN73645"/>
    <property type="gene ID" value="APL_0543"/>
</dbReference>
<dbReference type="KEGG" id="apl:APL_0543"/>
<dbReference type="PATRIC" id="fig|416269.6.peg.574"/>
<dbReference type="eggNOG" id="COG0571">
    <property type="taxonomic scope" value="Bacteria"/>
</dbReference>
<dbReference type="HOGENOM" id="CLU_000907_1_1_6"/>
<dbReference type="Proteomes" id="UP000001432">
    <property type="component" value="Chromosome"/>
</dbReference>
<dbReference type="GO" id="GO:0005737">
    <property type="term" value="C:cytoplasm"/>
    <property type="evidence" value="ECO:0007669"/>
    <property type="project" value="UniProtKB-SubCell"/>
</dbReference>
<dbReference type="GO" id="GO:0003725">
    <property type="term" value="F:double-stranded RNA binding"/>
    <property type="evidence" value="ECO:0007669"/>
    <property type="project" value="TreeGrafter"/>
</dbReference>
<dbReference type="GO" id="GO:0046872">
    <property type="term" value="F:metal ion binding"/>
    <property type="evidence" value="ECO:0007669"/>
    <property type="project" value="UniProtKB-KW"/>
</dbReference>
<dbReference type="GO" id="GO:0004525">
    <property type="term" value="F:ribonuclease III activity"/>
    <property type="evidence" value="ECO:0007669"/>
    <property type="project" value="UniProtKB-UniRule"/>
</dbReference>
<dbReference type="GO" id="GO:0019843">
    <property type="term" value="F:rRNA binding"/>
    <property type="evidence" value="ECO:0007669"/>
    <property type="project" value="UniProtKB-KW"/>
</dbReference>
<dbReference type="GO" id="GO:0006397">
    <property type="term" value="P:mRNA processing"/>
    <property type="evidence" value="ECO:0007669"/>
    <property type="project" value="UniProtKB-UniRule"/>
</dbReference>
<dbReference type="GO" id="GO:0010468">
    <property type="term" value="P:regulation of gene expression"/>
    <property type="evidence" value="ECO:0007669"/>
    <property type="project" value="TreeGrafter"/>
</dbReference>
<dbReference type="GO" id="GO:0006364">
    <property type="term" value="P:rRNA processing"/>
    <property type="evidence" value="ECO:0007669"/>
    <property type="project" value="UniProtKB-UniRule"/>
</dbReference>
<dbReference type="GO" id="GO:0008033">
    <property type="term" value="P:tRNA processing"/>
    <property type="evidence" value="ECO:0007669"/>
    <property type="project" value="UniProtKB-KW"/>
</dbReference>
<dbReference type="CDD" id="cd10845">
    <property type="entry name" value="DSRM_RNAse_III_family"/>
    <property type="match status" value="1"/>
</dbReference>
<dbReference type="CDD" id="cd00593">
    <property type="entry name" value="RIBOc"/>
    <property type="match status" value="1"/>
</dbReference>
<dbReference type="FunFam" id="1.10.1520.10:FF:000001">
    <property type="entry name" value="Ribonuclease 3"/>
    <property type="match status" value="1"/>
</dbReference>
<dbReference type="FunFam" id="3.30.160.20:FF:000003">
    <property type="entry name" value="Ribonuclease 3"/>
    <property type="match status" value="1"/>
</dbReference>
<dbReference type="Gene3D" id="3.30.160.20">
    <property type="match status" value="1"/>
</dbReference>
<dbReference type="Gene3D" id="1.10.1520.10">
    <property type="entry name" value="Ribonuclease III domain"/>
    <property type="match status" value="1"/>
</dbReference>
<dbReference type="HAMAP" id="MF_00104">
    <property type="entry name" value="RNase_III"/>
    <property type="match status" value="1"/>
</dbReference>
<dbReference type="InterPro" id="IPR014720">
    <property type="entry name" value="dsRBD_dom"/>
</dbReference>
<dbReference type="InterPro" id="IPR011907">
    <property type="entry name" value="RNase_III"/>
</dbReference>
<dbReference type="InterPro" id="IPR000999">
    <property type="entry name" value="RNase_III_dom"/>
</dbReference>
<dbReference type="InterPro" id="IPR036389">
    <property type="entry name" value="RNase_III_sf"/>
</dbReference>
<dbReference type="NCBIfam" id="TIGR02191">
    <property type="entry name" value="RNaseIII"/>
    <property type="match status" value="1"/>
</dbReference>
<dbReference type="PANTHER" id="PTHR11207:SF0">
    <property type="entry name" value="RIBONUCLEASE 3"/>
    <property type="match status" value="1"/>
</dbReference>
<dbReference type="PANTHER" id="PTHR11207">
    <property type="entry name" value="RIBONUCLEASE III"/>
    <property type="match status" value="1"/>
</dbReference>
<dbReference type="Pfam" id="PF00035">
    <property type="entry name" value="dsrm"/>
    <property type="match status" value="1"/>
</dbReference>
<dbReference type="Pfam" id="PF14622">
    <property type="entry name" value="Ribonucleas_3_3"/>
    <property type="match status" value="1"/>
</dbReference>
<dbReference type="SMART" id="SM00358">
    <property type="entry name" value="DSRM"/>
    <property type="match status" value="1"/>
</dbReference>
<dbReference type="SMART" id="SM00535">
    <property type="entry name" value="RIBOc"/>
    <property type="match status" value="1"/>
</dbReference>
<dbReference type="SUPFAM" id="SSF54768">
    <property type="entry name" value="dsRNA-binding domain-like"/>
    <property type="match status" value="1"/>
</dbReference>
<dbReference type="SUPFAM" id="SSF69065">
    <property type="entry name" value="RNase III domain-like"/>
    <property type="match status" value="1"/>
</dbReference>
<dbReference type="PROSITE" id="PS50137">
    <property type="entry name" value="DS_RBD"/>
    <property type="match status" value="1"/>
</dbReference>
<dbReference type="PROSITE" id="PS00517">
    <property type="entry name" value="RNASE_3_1"/>
    <property type="match status" value="1"/>
</dbReference>
<dbReference type="PROSITE" id="PS50142">
    <property type="entry name" value="RNASE_3_2"/>
    <property type="match status" value="1"/>
</dbReference>
<name>RNC_ACTP2</name>
<reference key="1">
    <citation type="journal article" date="2008" name="J. Bacteriol.">
        <title>The complete genome sequence of Actinobacillus pleuropneumoniae L20 (serotype 5b).</title>
        <authorList>
            <person name="Foote S.J."/>
            <person name="Bosse J.T."/>
            <person name="Bouevitch A.B."/>
            <person name="Langford P.R."/>
            <person name="Young N.M."/>
            <person name="Nash J.H.E."/>
        </authorList>
    </citation>
    <scope>NUCLEOTIDE SEQUENCE [LARGE SCALE GENOMIC DNA]</scope>
    <source>
        <strain>L20</strain>
    </source>
</reference>
<protein>
    <recommendedName>
        <fullName evidence="1">Ribonuclease 3</fullName>
        <ecNumber evidence="1">3.1.26.3</ecNumber>
    </recommendedName>
    <alternativeName>
        <fullName evidence="1">Ribonuclease III</fullName>
        <shortName evidence="1">RNase III</shortName>
    </alternativeName>
</protein>
<sequence length="223" mass="25254">MQLERLQKKLSYQFTNLDYLLQALTHRSAGAKNNERLEFLGDSILNFAIGKALFEKFPKANEGELSRMRATLVREQTLAILARQFGLGEYMRLGAGELKSGGYRRESILSDCVEAIIAAIYLDAGMDKAIEQVHLWYQDLLAEMKPGDAQKDPKTRLQEFLQGRKLPLPTYEVLDIKGEAHNQTFKVTCKIEMLEEIFIGIGTSRRKAEQNAAEQVLAKLTTK</sequence>
<feature type="chain" id="PRO_1000075715" description="Ribonuclease 3">
    <location>
        <begin position="1"/>
        <end position="223"/>
    </location>
</feature>
<feature type="domain" description="RNase III" evidence="1">
    <location>
        <begin position="3"/>
        <end position="125"/>
    </location>
</feature>
<feature type="domain" description="DRBM" evidence="1">
    <location>
        <begin position="152"/>
        <end position="222"/>
    </location>
</feature>
<feature type="active site" evidence="1">
    <location>
        <position position="42"/>
    </location>
</feature>
<feature type="active site" evidence="1">
    <location>
        <position position="114"/>
    </location>
</feature>
<feature type="binding site" evidence="1">
    <location>
        <position position="38"/>
    </location>
    <ligand>
        <name>Mg(2+)</name>
        <dbReference type="ChEBI" id="CHEBI:18420"/>
    </ligand>
</feature>
<feature type="binding site" evidence="1">
    <location>
        <position position="111"/>
    </location>
    <ligand>
        <name>Mg(2+)</name>
        <dbReference type="ChEBI" id="CHEBI:18420"/>
    </ligand>
</feature>
<feature type="binding site" evidence="1">
    <location>
        <position position="114"/>
    </location>
    <ligand>
        <name>Mg(2+)</name>
        <dbReference type="ChEBI" id="CHEBI:18420"/>
    </ligand>
</feature>
<organism>
    <name type="scientific">Actinobacillus pleuropneumoniae serotype 5b (strain L20)</name>
    <dbReference type="NCBI Taxonomy" id="416269"/>
    <lineage>
        <taxon>Bacteria</taxon>
        <taxon>Pseudomonadati</taxon>
        <taxon>Pseudomonadota</taxon>
        <taxon>Gammaproteobacteria</taxon>
        <taxon>Pasteurellales</taxon>
        <taxon>Pasteurellaceae</taxon>
        <taxon>Actinobacillus</taxon>
    </lineage>
</organism>